<dbReference type="EMBL" id="BX571867">
    <property type="protein sequence ID" value="CAE15041.1"/>
    <property type="molecule type" value="Genomic_DNA"/>
</dbReference>
<dbReference type="RefSeq" id="WP_011146889.1">
    <property type="nucleotide sequence ID" value="NC_005126.1"/>
</dbReference>
<dbReference type="SMR" id="Q7N3P8"/>
<dbReference type="STRING" id="243265.plu2667"/>
<dbReference type="GeneID" id="88804628"/>
<dbReference type="KEGG" id="plu:plu2667"/>
<dbReference type="eggNOG" id="COG0291">
    <property type="taxonomic scope" value="Bacteria"/>
</dbReference>
<dbReference type="HOGENOM" id="CLU_169643_1_1_6"/>
<dbReference type="OrthoDB" id="47476at2"/>
<dbReference type="Proteomes" id="UP000002514">
    <property type="component" value="Chromosome"/>
</dbReference>
<dbReference type="GO" id="GO:0022625">
    <property type="term" value="C:cytosolic large ribosomal subunit"/>
    <property type="evidence" value="ECO:0007669"/>
    <property type="project" value="TreeGrafter"/>
</dbReference>
<dbReference type="GO" id="GO:0003735">
    <property type="term" value="F:structural constituent of ribosome"/>
    <property type="evidence" value="ECO:0007669"/>
    <property type="project" value="InterPro"/>
</dbReference>
<dbReference type="GO" id="GO:0006412">
    <property type="term" value="P:translation"/>
    <property type="evidence" value="ECO:0007669"/>
    <property type="project" value="UniProtKB-UniRule"/>
</dbReference>
<dbReference type="FunFam" id="4.10.410.60:FF:000001">
    <property type="entry name" value="50S ribosomal protein L35"/>
    <property type="match status" value="1"/>
</dbReference>
<dbReference type="Gene3D" id="4.10.410.60">
    <property type="match status" value="1"/>
</dbReference>
<dbReference type="HAMAP" id="MF_00514">
    <property type="entry name" value="Ribosomal_bL35"/>
    <property type="match status" value="1"/>
</dbReference>
<dbReference type="InterPro" id="IPR001706">
    <property type="entry name" value="Ribosomal_bL35"/>
</dbReference>
<dbReference type="InterPro" id="IPR021137">
    <property type="entry name" value="Ribosomal_bL35-like"/>
</dbReference>
<dbReference type="InterPro" id="IPR018265">
    <property type="entry name" value="Ribosomal_bL35_CS"/>
</dbReference>
<dbReference type="InterPro" id="IPR037229">
    <property type="entry name" value="Ribosomal_bL35_sf"/>
</dbReference>
<dbReference type="NCBIfam" id="TIGR00001">
    <property type="entry name" value="rpmI_bact"/>
    <property type="match status" value="1"/>
</dbReference>
<dbReference type="PANTHER" id="PTHR33343">
    <property type="entry name" value="54S RIBOSOMAL PROTEIN BL35M"/>
    <property type="match status" value="1"/>
</dbReference>
<dbReference type="PANTHER" id="PTHR33343:SF1">
    <property type="entry name" value="LARGE RIBOSOMAL SUBUNIT PROTEIN BL35M"/>
    <property type="match status" value="1"/>
</dbReference>
<dbReference type="Pfam" id="PF01632">
    <property type="entry name" value="Ribosomal_L35p"/>
    <property type="match status" value="1"/>
</dbReference>
<dbReference type="PRINTS" id="PR00064">
    <property type="entry name" value="RIBOSOMALL35"/>
</dbReference>
<dbReference type="SUPFAM" id="SSF143034">
    <property type="entry name" value="L35p-like"/>
    <property type="match status" value="1"/>
</dbReference>
<dbReference type="PROSITE" id="PS00936">
    <property type="entry name" value="RIBOSOMAL_L35"/>
    <property type="match status" value="1"/>
</dbReference>
<gene>
    <name evidence="1" type="primary">rpmI</name>
    <name type="ordered locus">plu2667</name>
</gene>
<evidence type="ECO:0000255" key="1">
    <source>
        <dbReference type="HAMAP-Rule" id="MF_00514"/>
    </source>
</evidence>
<evidence type="ECO:0000305" key="2"/>
<reference key="1">
    <citation type="journal article" date="2003" name="Nat. Biotechnol.">
        <title>The genome sequence of the entomopathogenic bacterium Photorhabdus luminescens.</title>
        <authorList>
            <person name="Duchaud E."/>
            <person name="Rusniok C."/>
            <person name="Frangeul L."/>
            <person name="Buchrieser C."/>
            <person name="Givaudan A."/>
            <person name="Taourit S."/>
            <person name="Bocs S."/>
            <person name="Boursaux-Eude C."/>
            <person name="Chandler M."/>
            <person name="Charles J.-F."/>
            <person name="Dassa E."/>
            <person name="Derose R."/>
            <person name="Derzelle S."/>
            <person name="Freyssinet G."/>
            <person name="Gaudriault S."/>
            <person name="Medigue C."/>
            <person name="Lanois A."/>
            <person name="Powell K."/>
            <person name="Siguier P."/>
            <person name="Vincent R."/>
            <person name="Wingate V."/>
            <person name="Zouine M."/>
            <person name="Glaser P."/>
            <person name="Boemare N."/>
            <person name="Danchin A."/>
            <person name="Kunst F."/>
        </authorList>
    </citation>
    <scope>NUCLEOTIDE SEQUENCE [LARGE SCALE GENOMIC DNA]</scope>
    <source>
        <strain>DSM 15139 / CIP 105565 / TT01</strain>
    </source>
</reference>
<organism>
    <name type="scientific">Photorhabdus laumondii subsp. laumondii (strain DSM 15139 / CIP 105565 / TT01)</name>
    <name type="common">Photorhabdus luminescens subsp. laumondii</name>
    <dbReference type="NCBI Taxonomy" id="243265"/>
    <lineage>
        <taxon>Bacteria</taxon>
        <taxon>Pseudomonadati</taxon>
        <taxon>Pseudomonadota</taxon>
        <taxon>Gammaproteobacteria</taxon>
        <taxon>Enterobacterales</taxon>
        <taxon>Morganellaceae</taxon>
        <taxon>Photorhabdus</taxon>
    </lineage>
</organism>
<proteinExistence type="inferred from homology"/>
<feature type="chain" id="PRO_0000177396" description="Large ribosomal subunit protein bL35">
    <location>
        <begin position="1"/>
        <end position="65"/>
    </location>
</feature>
<sequence>MPKIKTVRGAAKRFKKTASGGFKRKRANLRHILTKKSTKRKRHLRPKGMVSKGDLGLVVACLPYA</sequence>
<keyword id="KW-1185">Reference proteome</keyword>
<keyword id="KW-0687">Ribonucleoprotein</keyword>
<keyword id="KW-0689">Ribosomal protein</keyword>
<accession>Q7N3P8</accession>
<comment type="similarity">
    <text evidence="1">Belongs to the bacterial ribosomal protein bL35 family.</text>
</comment>
<protein>
    <recommendedName>
        <fullName evidence="1">Large ribosomal subunit protein bL35</fullName>
    </recommendedName>
    <alternativeName>
        <fullName evidence="2">50S ribosomal protein L35</fullName>
    </alternativeName>
</protein>
<name>RL35_PHOLL</name>